<keyword id="KW-0025">Alternative splicing</keyword>
<keyword id="KW-0217">Developmental protein</keyword>
<keyword id="KW-0221">Differentiation</keyword>
<keyword id="KW-1015">Disulfide bond</keyword>
<keyword id="KW-0325">Glycoprotein</keyword>
<keyword id="KW-0472">Membrane</keyword>
<keyword id="KW-0524">Neurogenesis</keyword>
<keyword id="KW-1267">Proteomics identification</keyword>
<keyword id="KW-1185">Reference proteome</keyword>
<keyword id="KW-0677">Repeat</keyword>
<keyword id="KW-0735">Signal-anchor</keyword>
<keyword id="KW-0812">Transmembrane</keyword>
<keyword id="KW-1133">Transmembrane helix</keyword>
<accession>Q9P283</accession>
<accession>A8K5U2</accession>
<accession>B7Z393</accession>
<accession>F8W9U8</accession>
<accession>Q6DD89</accession>
<accession>Q6UY12</accession>
<accession>Q9NW17</accession>
<comment type="function">
    <text evidence="1">May act as a positive axonal guidance cue.</text>
</comment>
<comment type="subcellular location">
    <subcellularLocation>
        <location evidence="2">Membrane</location>
        <topology evidence="2">Single-pass type III membrane protein</topology>
    </subcellularLocation>
</comment>
<comment type="alternative products">
    <event type="alternative splicing"/>
    <isoform>
        <id>Q9P283-1</id>
        <name>1</name>
        <sequence type="displayed"/>
    </isoform>
    <isoform>
        <id>Q9P283-2</id>
        <name>2</name>
        <sequence type="described" ref="VSP_029462 VSP_029464 VSP_029465"/>
    </isoform>
    <isoform>
        <id>Q9P283-3</id>
        <name>3</name>
        <sequence type="described" ref="VSP_029463"/>
    </isoform>
    <isoform>
        <id>Q9P283-4</id>
        <name>4</name>
        <sequence type="described" ref="VSP_044748"/>
    </isoform>
</comment>
<comment type="similarity">
    <text evidence="11">Belongs to the semaphorin family.</text>
</comment>
<comment type="caution">
    <text evidence="11">It is uncertain whether Met-1 or Met-59 is the initiator.</text>
</comment>
<comment type="sequence caution" evidence="11">
    <conflict type="erroneous initiation">
        <sequence resource="EMBL-CDS" id="BAA91570"/>
    </conflict>
</comment>
<comment type="sequence caution" evidence="11">
    <conflict type="erroneous initiation">
        <sequence resource="EMBL-CDS" id="BAA95969"/>
    </conflict>
</comment>
<feature type="chain" id="PRO_0000032337" description="Semaphorin-5B">
    <location>
        <begin position="1"/>
        <end position="1151"/>
    </location>
</feature>
<feature type="topological domain" description="Extracellular" evidence="2">
    <location>
        <begin position="1"/>
        <end position="1036"/>
    </location>
</feature>
<feature type="transmembrane region" description="Helical; Signal-anchor for type III membrane protein" evidence="2">
    <location>
        <begin position="1037"/>
        <end position="1057"/>
    </location>
</feature>
<feature type="topological domain" description="Cytoplasmic" evidence="2">
    <location>
        <begin position="1058"/>
        <end position="1151"/>
    </location>
</feature>
<feature type="domain" description="Sema" evidence="4">
    <location>
        <begin position="103"/>
        <end position="553"/>
    </location>
</feature>
<feature type="domain" description="PSI" evidence="2">
    <location>
        <begin position="555"/>
        <end position="602"/>
    </location>
</feature>
<feature type="domain" description="TSP type-1 1" evidence="3">
    <location>
        <begin position="664"/>
        <end position="720"/>
    </location>
</feature>
<feature type="domain" description="TSP type-1 2" evidence="3">
    <location>
        <begin position="722"/>
        <end position="771"/>
    </location>
</feature>
<feature type="domain" description="TSP type-1 3" evidence="3">
    <location>
        <begin position="853"/>
        <end position="908"/>
    </location>
</feature>
<feature type="domain" description="TSP type-1 4" evidence="3">
    <location>
        <begin position="910"/>
        <end position="965"/>
    </location>
</feature>
<feature type="domain" description="TSP type-1 5" evidence="3">
    <location>
        <begin position="966"/>
        <end position="1010"/>
    </location>
</feature>
<feature type="glycosylation site" description="N-linked (GlcNAc...) asparagine" evidence="2">
    <location>
        <position position="153"/>
    </location>
</feature>
<feature type="glycosylation site" description="N-linked (GlcNAc...) asparagine" evidence="2">
    <location>
        <position position="236"/>
    </location>
</feature>
<feature type="glycosylation site" description="N-linked (GlcNAc...) asparagine" evidence="2">
    <location>
        <position position="345"/>
    </location>
</feature>
<feature type="glycosylation site" description="N-linked (GlcNAc...) asparagine" evidence="2">
    <location>
        <position position="436"/>
    </location>
</feature>
<feature type="glycosylation site" description="O-linked (GalNAc...) threonine" evidence="2">
    <location>
        <position position="788"/>
    </location>
</feature>
<feature type="disulfide bond" evidence="4">
    <location>
        <begin position="172"/>
        <end position="182"/>
    </location>
</feature>
<feature type="disulfide bond" evidence="4">
    <location>
        <begin position="199"/>
        <end position="208"/>
    </location>
</feature>
<feature type="disulfide bond" evidence="4">
    <location>
        <begin position="322"/>
        <end position="425"/>
    </location>
</feature>
<feature type="disulfide bond" evidence="4">
    <location>
        <begin position="346"/>
        <end position="388"/>
    </location>
</feature>
<feature type="disulfide bond" evidence="3">
    <location>
        <begin position="676"/>
        <end position="713"/>
    </location>
</feature>
<feature type="disulfide bond" evidence="3">
    <location>
        <begin position="680"/>
        <end position="719"/>
    </location>
</feature>
<feature type="disulfide bond" evidence="3">
    <location>
        <begin position="691"/>
        <end position="703"/>
    </location>
</feature>
<feature type="disulfide bond" evidence="3">
    <location>
        <begin position="734"/>
        <end position="765"/>
    </location>
</feature>
<feature type="disulfide bond" evidence="3">
    <location>
        <begin position="738"/>
        <end position="770"/>
    </location>
</feature>
<feature type="disulfide bond" evidence="3">
    <location>
        <begin position="749"/>
        <end position="755"/>
    </location>
</feature>
<feature type="disulfide bond" evidence="3">
    <location>
        <begin position="865"/>
        <end position="902"/>
    </location>
</feature>
<feature type="disulfide bond" evidence="3">
    <location>
        <begin position="869"/>
        <end position="907"/>
    </location>
</feature>
<feature type="disulfide bond" evidence="3">
    <location>
        <begin position="880"/>
        <end position="892"/>
    </location>
</feature>
<feature type="disulfide bond" evidence="3">
    <location>
        <begin position="922"/>
        <end position="959"/>
    </location>
</feature>
<feature type="disulfide bond" evidence="3">
    <location>
        <begin position="926"/>
        <end position="964"/>
    </location>
</feature>
<feature type="disulfide bond" evidence="3">
    <location>
        <begin position="937"/>
        <end position="949"/>
    </location>
</feature>
<feature type="splice variant" id="VSP_044748" description="In isoform 4." evidence="10">
    <original>M</original>
    <variation>MLHLSAEEAIGCVRVRRSFIDELAFGRGHSTGTGKQKRRDRVSGSSWCLACVSWM</variation>
    <location>
        <position position="1"/>
    </location>
</feature>
<feature type="splice variant" id="VSP_029462" description="In isoform 2." evidence="9">
    <location>
        <position position="760"/>
    </location>
</feature>
<feature type="splice variant" id="VSP_029463" description="In isoform 3." evidence="10">
    <location>
        <begin position="944"/>
        <end position="964"/>
    </location>
</feature>
<feature type="splice variant" id="VSP_029464" description="In isoform 2." evidence="9">
    <location>
        <position position="966"/>
    </location>
</feature>
<feature type="splice variant" id="VSP_029465" description="In isoform 2." evidence="9">
    <original>FNLIHLVATGISCFLGSGLLTLAVYLSCQHCQRQSQESTLVHPATPNHLHYKGGGTPKNEKYTPMEFKTLNKNNLIPDDRANFYPLQQTNVYTTTYYPSPLNKHSFRPEASPGQRCFPNS</original>
    <variation>KRNRTYLMLRSSQPSSTPLQSLDSFHILLQTAKLCWGPHCFEMGSISSTWWPRASPASWALGS</variation>
    <location>
        <begin position="1032"/>
        <end position="1151"/>
    </location>
</feature>
<feature type="sequence variant" id="VAR_037196" description="In a breast cancer sample; somatic mutation; dbSNP:rs148102705." evidence="8">
    <original>G</original>
    <variation>S</variation>
    <location>
        <position position="42"/>
    </location>
</feature>
<feature type="sequence variant" id="VAR_037197" description="In dbSNP:rs2276774." evidence="5 6">
    <original>I</original>
    <variation>T</variation>
    <location>
        <position position="220"/>
    </location>
</feature>
<feature type="sequence variant" id="VAR_037198" description="In a breast cancer sample; somatic mutation." evidence="8">
    <original>I</original>
    <variation>M</variation>
    <location>
        <position position="223"/>
    </location>
</feature>
<feature type="sequence variant" id="VAR_037199" description="In dbSNP:rs2276781." evidence="6">
    <original>M</original>
    <variation>T</variation>
    <location>
        <position position="742"/>
    </location>
</feature>
<feature type="sequence variant" id="VAR_037200" description="In dbSNP:rs2276782." evidence="5 6 7">
    <original>V</original>
    <variation>D</variation>
    <location>
        <position position="840"/>
    </location>
</feature>
<feature type="sequence variant" id="VAR_037201" description="In dbSNP:rs35306342.">
    <original>S</original>
    <variation>P</variation>
    <location>
        <position position="996"/>
    </location>
</feature>
<feature type="sequence variant" id="VAR_037202" description="In dbSNP:rs2303983." evidence="5 6 7">
    <original>D</original>
    <variation>G</variation>
    <location>
        <position position="1028"/>
    </location>
</feature>
<feature type="sequence conflict" description="In Ref. 2; AAQ88491." evidence="11" ref="2">
    <original>C</original>
    <variation>F</variation>
    <location>
        <position position="703"/>
    </location>
</feature>
<feature type="sequence conflict" description="In Ref. 3; BAH12129." evidence="11" ref="3">
    <original>R</original>
    <variation>K</variation>
    <location sequence="Q9P283-4">
        <position position="14"/>
    </location>
</feature>
<proteinExistence type="evidence at protein level"/>
<name>SEM5B_HUMAN</name>
<evidence type="ECO:0000250" key="1">
    <source>
        <dbReference type="UniProtKB" id="Q60519"/>
    </source>
</evidence>
<evidence type="ECO:0000255" key="2"/>
<evidence type="ECO:0000255" key="3">
    <source>
        <dbReference type="PROSITE-ProRule" id="PRU00210"/>
    </source>
</evidence>
<evidence type="ECO:0000255" key="4">
    <source>
        <dbReference type="PROSITE-ProRule" id="PRU00352"/>
    </source>
</evidence>
<evidence type="ECO:0000269" key="5">
    <source>
    </source>
</evidence>
<evidence type="ECO:0000269" key="6">
    <source>
    </source>
</evidence>
<evidence type="ECO:0000269" key="7">
    <source>
    </source>
</evidence>
<evidence type="ECO:0000269" key="8">
    <source>
    </source>
</evidence>
<evidence type="ECO:0000303" key="9">
    <source>
    </source>
</evidence>
<evidence type="ECO:0000303" key="10">
    <source>
    </source>
</evidence>
<evidence type="ECO:0000305" key="11"/>
<gene>
    <name type="primary">SEMA5B</name>
    <name type="synonym">KIAA1445</name>
    <name type="synonym">SEMAG</name>
    <name type="ORF">UNQ5867/PRO34001</name>
</gene>
<reference key="1">
    <citation type="journal article" date="2000" name="DNA Res.">
        <title>Prediction of the coding sequences of unidentified human genes. XVII. The complete sequences of 100 new cDNA clones from brain which code for large proteins in vitro.</title>
        <authorList>
            <person name="Nagase T."/>
            <person name="Kikuno R."/>
            <person name="Ishikawa K."/>
            <person name="Hirosawa M."/>
            <person name="Ohara O."/>
        </authorList>
    </citation>
    <scope>NUCLEOTIDE SEQUENCE [LARGE SCALE MRNA] (ISOFORM 1)</scope>
    <scope>VARIANTS THR-220; ASP-840 AND GLY-1028</scope>
    <source>
        <tissue>Brain</tissue>
    </source>
</reference>
<reference key="2">
    <citation type="journal article" date="2003" name="Genome Res.">
        <title>The secreted protein discovery initiative (SPDI), a large-scale effort to identify novel human secreted and transmembrane proteins: a bioinformatics assessment.</title>
        <authorList>
            <person name="Clark H.F."/>
            <person name="Gurney A.L."/>
            <person name="Abaya E."/>
            <person name="Baker K."/>
            <person name="Baldwin D.T."/>
            <person name="Brush J."/>
            <person name="Chen J."/>
            <person name="Chow B."/>
            <person name="Chui C."/>
            <person name="Crowley C."/>
            <person name="Currell B."/>
            <person name="Deuel B."/>
            <person name="Dowd P."/>
            <person name="Eaton D."/>
            <person name="Foster J.S."/>
            <person name="Grimaldi C."/>
            <person name="Gu Q."/>
            <person name="Hass P.E."/>
            <person name="Heldens S."/>
            <person name="Huang A."/>
            <person name="Kim H.S."/>
            <person name="Klimowski L."/>
            <person name="Jin Y."/>
            <person name="Johnson S."/>
            <person name="Lee J."/>
            <person name="Lewis L."/>
            <person name="Liao D."/>
            <person name="Mark M.R."/>
            <person name="Robbie E."/>
            <person name="Sanchez C."/>
            <person name="Schoenfeld J."/>
            <person name="Seshagiri S."/>
            <person name="Simmons L."/>
            <person name="Singh J."/>
            <person name="Smith V."/>
            <person name="Stinson J."/>
            <person name="Vagts A."/>
            <person name="Vandlen R.L."/>
            <person name="Watanabe C."/>
            <person name="Wieand D."/>
            <person name="Woods K."/>
            <person name="Xie M.-H."/>
            <person name="Yansura D.G."/>
            <person name="Yi S."/>
            <person name="Yu G."/>
            <person name="Yuan J."/>
            <person name="Zhang M."/>
            <person name="Zhang Z."/>
            <person name="Goddard A.D."/>
            <person name="Wood W.I."/>
            <person name="Godowski P.J."/>
            <person name="Gray A.M."/>
        </authorList>
    </citation>
    <scope>NUCLEOTIDE SEQUENCE [LARGE SCALE MRNA] (ISOFORM 2)</scope>
</reference>
<reference key="3">
    <citation type="journal article" date="2004" name="Nat. Genet.">
        <title>Complete sequencing and characterization of 21,243 full-length human cDNAs.</title>
        <authorList>
            <person name="Ota T."/>
            <person name="Suzuki Y."/>
            <person name="Nishikawa T."/>
            <person name="Otsuki T."/>
            <person name="Sugiyama T."/>
            <person name="Irie R."/>
            <person name="Wakamatsu A."/>
            <person name="Hayashi K."/>
            <person name="Sato H."/>
            <person name="Nagai K."/>
            <person name="Kimura K."/>
            <person name="Makita H."/>
            <person name="Sekine M."/>
            <person name="Obayashi M."/>
            <person name="Nishi T."/>
            <person name="Shibahara T."/>
            <person name="Tanaka T."/>
            <person name="Ishii S."/>
            <person name="Yamamoto J."/>
            <person name="Saito K."/>
            <person name="Kawai Y."/>
            <person name="Isono Y."/>
            <person name="Nakamura Y."/>
            <person name="Nagahari K."/>
            <person name="Murakami K."/>
            <person name="Yasuda T."/>
            <person name="Iwayanagi T."/>
            <person name="Wagatsuma M."/>
            <person name="Shiratori A."/>
            <person name="Sudo H."/>
            <person name="Hosoiri T."/>
            <person name="Kaku Y."/>
            <person name="Kodaira H."/>
            <person name="Kondo H."/>
            <person name="Sugawara M."/>
            <person name="Takahashi M."/>
            <person name="Kanda K."/>
            <person name="Yokoi T."/>
            <person name="Furuya T."/>
            <person name="Kikkawa E."/>
            <person name="Omura Y."/>
            <person name="Abe K."/>
            <person name="Kamihara K."/>
            <person name="Katsuta N."/>
            <person name="Sato K."/>
            <person name="Tanikawa M."/>
            <person name="Yamazaki M."/>
            <person name="Ninomiya K."/>
            <person name="Ishibashi T."/>
            <person name="Yamashita H."/>
            <person name="Murakawa K."/>
            <person name="Fujimori K."/>
            <person name="Tanai H."/>
            <person name="Kimata M."/>
            <person name="Watanabe M."/>
            <person name="Hiraoka S."/>
            <person name="Chiba Y."/>
            <person name="Ishida S."/>
            <person name="Ono Y."/>
            <person name="Takiguchi S."/>
            <person name="Watanabe S."/>
            <person name="Yosida M."/>
            <person name="Hotuta T."/>
            <person name="Kusano J."/>
            <person name="Kanehori K."/>
            <person name="Takahashi-Fujii A."/>
            <person name="Hara H."/>
            <person name="Tanase T.-O."/>
            <person name="Nomura Y."/>
            <person name="Togiya S."/>
            <person name="Komai F."/>
            <person name="Hara R."/>
            <person name="Takeuchi K."/>
            <person name="Arita M."/>
            <person name="Imose N."/>
            <person name="Musashino K."/>
            <person name="Yuuki H."/>
            <person name="Oshima A."/>
            <person name="Sasaki N."/>
            <person name="Aotsuka S."/>
            <person name="Yoshikawa Y."/>
            <person name="Matsunawa H."/>
            <person name="Ichihara T."/>
            <person name="Shiohata N."/>
            <person name="Sano S."/>
            <person name="Moriya S."/>
            <person name="Momiyama H."/>
            <person name="Satoh N."/>
            <person name="Takami S."/>
            <person name="Terashima Y."/>
            <person name="Suzuki O."/>
            <person name="Nakagawa S."/>
            <person name="Senoh A."/>
            <person name="Mizoguchi H."/>
            <person name="Goto Y."/>
            <person name="Shimizu F."/>
            <person name="Wakebe H."/>
            <person name="Hishigaki H."/>
            <person name="Watanabe T."/>
            <person name="Sugiyama A."/>
            <person name="Takemoto M."/>
            <person name="Kawakami B."/>
            <person name="Yamazaki M."/>
            <person name="Watanabe K."/>
            <person name="Kumagai A."/>
            <person name="Itakura S."/>
            <person name="Fukuzumi Y."/>
            <person name="Fujimori Y."/>
            <person name="Komiyama M."/>
            <person name="Tashiro H."/>
            <person name="Tanigami A."/>
            <person name="Fujiwara T."/>
            <person name="Ono T."/>
            <person name="Yamada K."/>
            <person name="Fujii Y."/>
            <person name="Ozaki K."/>
            <person name="Hirao M."/>
            <person name="Ohmori Y."/>
            <person name="Kawabata A."/>
            <person name="Hikiji T."/>
            <person name="Kobatake N."/>
            <person name="Inagaki H."/>
            <person name="Ikema Y."/>
            <person name="Okamoto S."/>
            <person name="Okitani R."/>
            <person name="Kawakami T."/>
            <person name="Noguchi S."/>
            <person name="Itoh T."/>
            <person name="Shigeta K."/>
            <person name="Senba T."/>
            <person name="Matsumura K."/>
            <person name="Nakajima Y."/>
            <person name="Mizuno T."/>
            <person name="Morinaga M."/>
            <person name="Sasaki M."/>
            <person name="Togashi T."/>
            <person name="Oyama M."/>
            <person name="Hata H."/>
            <person name="Watanabe M."/>
            <person name="Komatsu T."/>
            <person name="Mizushima-Sugano J."/>
            <person name="Satoh T."/>
            <person name="Shirai Y."/>
            <person name="Takahashi Y."/>
            <person name="Nakagawa K."/>
            <person name="Okumura K."/>
            <person name="Nagase T."/>
            <person name="Nomura N."/>
            <person name="Kikuchi H."/>
            <person name="Masuho Y."/>
            <person name="Yamashita R."/>
            <person name="Nakai K."/>
            <person name="Yada T."/>
            <person name="Nakamura Y."/>
            <person name="Ohara O."/>
            <person name="Isogai T."/>
            <person name="Sugano S."/>
        </authorList>
    </citation>
    <scope>NUCLEOTIDE SEQUENCE [LARGE SCALE MRNA] (ISOFORMS 1 AND 4)</scope>
    <scope>NUCLEOTIDE SEQUENCE [LARGE SCALE MRNA] OF 935-1151 (ISOFORM 3)</scope>
    <scope>VARIANTS THR-220; THR-742; ASP-840 AND GLY-1028</scope>
    <source>
        <tissue>Brain</tissue>
        <tissue>Hippocampus</tissue>
    </source>
</reference>
<reference key="4">
    <citation type="journal article" date="2006" name="Nature">
        <title>The DNA sequence, annotation and analysis of human chromosome 3.</title>
        <authorList>
            <person name="Muzny D.M."/>
            <person name="Scherer S.E."/>
            <person name="Kaul R."/>
            <person name="Wang J."/>
            <person name="Yu J."/>
            <person name="Sudbrak R."/>
            <person name="Buhay C.J."/>
            <person name="Chen R."/>
            <person name="Cree A."/>
            <person name="Ding Y."/>
            <person name="Dugan-Rocha S."/>
            <person name="Gill R."/>
            <person name="Gunaratne P."/>
            <person name="Harris R.A."/>
            <person name="Hawes A.C."/>
            <person name="Hernandez J."/>
            <person name="Hodgson A.V."/>
            <person name="Hume J."/>
            <person name="Jackson A."/>
            <person name="Khan Z.M."/>
            <person name="Kovar-Smith C."/>
            <person name="Lewis L.R."/>
            <person name="Lozado R.J."/>
            <person name="Metzker M.L."/>
            <person name="Milosavljevic A."/>
            <person name="Miner G.R."/>
            <person name="Morgan M.B."/>
            <person name="Nazareth L.V."/>
            <person name="Scott G."/>
            <person name="Sodergren E."/>
            <person name="Song X.-Z."/>
            <person name="Steffen D."/>
            <person name="Wei S."/>
            <person name="Wheeler D.A."/>
            <person name="Wright M.W."/>
            <person name="Worley K.C."/>
            <person name="Yuan Y."/>
            <person name="Zhang Z."/>
            <person name="Adams C.Q."/>
            <person name="Ansari-Lari M.A."/>
            <person name="Ayele M."/>
            <person name="Brown M.J."/>
            <person name="Chen G."/>
            <person name="Chen Z."/>
            <person name="Clendenning J."/>
            <person name="Clerc-Blankenburg K.P."/>
            <person name="Chen R."/>
            <person name="Chen Z."/>
            <person name="Davis C."/>
            <person name="Delgado O."/>
            <person name="Dinh H.H."/>
            <person name="Dong W."/>
            <person name="Draper H."/>
            <person name="Ernst S."/>
            <person name="Fu G."/>
            <person name="Gonzalez-Garay M.L."/>
            <person name="Garcia D.K."/>
            <person name="Gillett W."/>
            <person name="Gu J."/>
            <person name="Hao B."/>
            <person name="Haugen E."/>
            <person name="Havlak P."/>
            <person name="He X."/>
            <person name="Hennig S."/>
            <person name="Hu S."/>
            <person name="Huang W."/>
            <person name="Jackson L.R."/>
            <person name="Jacob L.S."/>
            <person name="Kelly S.H."/>
            <person name="Kube M."/>
            <person name="Levy R."/>
            <person name="Li Z."/>
            <person name="Liu B."/>
            <person name="Liu J."/>
            <person name="Liu W."/>
            <person name="Lu J."/>
            <person name="Maheshwari M."/>
            <person name="Nguyen B.-V."/>
            <person name="Okwuonu G.O."/>
            <person name="Palmeiri A."/>
            <person name="Pasternak S."/>
            <person name="Perez L.M."/>
            <person name="Phelps K.A."/>
            <person name="Plopper F.J."/>
            <person name="Qiang B."/>
            <person name="Raymond C."/>
            <person name="Rodriguez R."/>
            <person name="Saenphimmachak C."/>
            <person name="Santibanez J."/>
            <person name="Shen H."/>
            <person name="Shen Y."/>
            <person name="Subramanian S."/>
            <person name="Tabor P.E."/>
            <person name="Verduzco D."/>
            <person name="Waldron L."/>
            <person name="Wang J."/>
            <person name="Wang J."/>
            <person name="Wang Q."/>
            <person name="Williams G.A."/>
            <person name="Wong G.K.-S."/>
            <person name="Yao Z."/>
            <person name="Zhang J."/>
            <person name="Zhang X."/>
            <person name="Zhao G."/>
            <person name="Zhou J."/>
            <person name="Zhou Y."/>
            <person name="Nelson D."/>
            <person name="Lehrach H."/>
            <person name="Reinhardt R."/>
            <person name="Naylor S.L."/>
            <person name="Yang H."/>
            <person name="Olson M."/>
            <person name="Weinstock G."/>
            <person name="Gibbs R.A."/>
        </authorList>
    </citation>
    <scope>NUCLEOTIDE SEQUENCE [LARGE SCALE GENOMIC DNA]</scope>
</reference>
<reference key="5">
    <citation type="submission" date="2005-09" db="EMBL/GenBank/DDBJ databases">
        <authorList>
            <person name="Mural R.J."/>
            <person name="Istrail S."/>
            <person name="Sutton G.G."/>
            <person name="Florea L."/>
            <person name="Halpern A.L."/>
            <person name="Mobarry C.M."/>
            <person name="Lippert R."/>
            <person name="Walenz B."/>
            <person name="Shatkay H."/>
            <person name="Dew I."/>
            <person name="Miller J.R."/>
            <person name="Flanigan M.J."/>
            <person name="Edwards N.J."/>
            <person name="Bolanos R."/>
            <person name="Fasulo D."/>
            <person name="Halldorsson B.V."/>
            <person name="Hannenhalli S."/>
            <person name="Turner R."/>
            <person name="Yooseph S."/>
            <person name="Lu F."/>
            <person name="Nusskern D.R."/>
            <person name="Shue B.C."/>
            <person name="Zheng X.H."/>
            <person name="Zhong F."/>
            <person name="Delcher A.L."/>
            <person name="Huson D.H."/>
            <person name="Kravitz S.A."/>
            <person name="Mouchard L."/>
            <person name="Reinert K."/>
            <person name="Remington K.A."/>
            <person name="Clark A.G."/>
            <person name="Waterman M.S."/>
            <person name="Eichler E.E."/>
            <person name="Adams M.D."/>
            <person name="Hunkapiller M.W."/>
            <person name="Myers E.W."/>
            <person name="Venter J.C."/>
        </authorList>
    </citation>
    <scope>NUCLEOTIDE SEQUENCE [LARGE SCALE GENOMIC DNA]</scope>
</reference>
<reference key="6">
    <citation type="journal article" date="2004" name="Genome Res.">
        <title>The status, quality, and expansion of the NIH full-length cDNA project: the Mammalian Gene Collection (MGC).</title>
        <authorList>
            <consortium name="The MGC Project Team"/>
        </authorList>
    </citation>
    <scope>NUCLEOTIDE SEQUENCE [LARGE SCALE MRNA] (ISOFORM 1)</scope>
    <scope>VARIANTS ASP-840 AND GLY-1028</scope>
    <source>
        <tissue>Ovary</tissue>
    </source>
</reference>
<reference key="7">
    <citation type="journal article" date="2006" name="Science">
        <title>The consensus coding sequences of human breast and colorectal cancers.</title>
        <authorList>
            <person name="Sjoeblom T."/>
            <person name="Jones S."/>
            <person name="Wood L.D."/>
            <person name="Parsons D.W."/>
            <person name="Lin J."/>
            <person name="Barber T.D."/>
            <person name="Mandelker D."/>
            <person name="Leary R.J."/>
            <person name="Ptak J."/>
            <person name="Silliman N."/>
            <person name="Szabo S."/>
            <person name="Buckhaults P."/>
            <person name="Farrell C."/>
            <person name="Meeh P."/>
            <person name="Markowitz S.D."/>
            <person name="Willis J."/>
            <person name="Dawson D."/>
            <person name="Willson J.K.V."/>
            <person name="Gazdar A.F."/>
            <person name="Hartigan J."/>
            <person name="Wu L."/>
            <person name="Liu C."/>
            <person name="Parmigiani G."/>
            <person name="Park B.H."/>
            <person name="Bachman K.E."/>
            <person name="Papadopoulos N."/>
            <person name="Vogelstein B."/>
            <person name="Kinzler K.W."/>
            <person name="Velculescu V.E."/>
        </authorList>
    </citation>
    <scope>VARIANTS [LARGE SCALE ANALYSIS] SER-42 AND MET-223</scope>
</reference>
<protein>
    <recommendedName>
        <fullName>Semaphorin-5B</fullName>
    </recommendedName>
</protein>
<sequence>MPCGFSPSPVAHHLVPGPPDTPAQQLRCGWTVGGWLLSLVRGLLPCLPPGARTAEGPIMVLAGPLAVSLLLPSLTLLVSHLSSSQDVSSEPSSEQQLCALSKHPTVAFEDLQPWVSNFTYPGARDFSQLALDPSGNQLIVGARNYLFRLSLANVSLLQATEWASSEDTRRSCQSKGKTEEECQNYVRVLIVAGRKVFMCGTNAFSPMCTSRQVGNLSRTIEKINGVARCPYDPRHNSTAVISSQGELYAATVIDFSGRDPAIYRSLGSGPPLRTAQYNSKWLNEPNFVAAYDIGLFAYFFLRENAVEHDCGRTVYSRVARVCKNDVGGRFLLEDTWTTFMKARLNCSRPGEVPFYYNELQSAFHLPEQDLIYGVFTTNVNSIAASAVCAFNLSAISQAFNGPFRYQENPRAAWLPIANPIPNFQCGTLPETGPNENLTERSLQDAQRLFLMSEAVQPVTPEPCVTQDSVRFSHLVVDLVQAKDTLYHVLYIGTESGTILKALSTASRSLHGCYLEELHVLPPGRREPLRSLRILHSARALFVGLRDGVLRVPLERCAAYRSQGACLGARDPYCGWDGKQQRCSTLEDSSNMSLWTQNITACPVRNVTRDGGFGPWSPWQPCEHLDGDNSGSCLCRARSCDSPRPRCGGLDCLGPAIHIANCSRNGAWTPWSSWALCSTSCGIGFQVRQRSCSNPAPRHGGRICVGKSREERFCNENTPCPVPIFWASWGSWSKCSSNCGGGMQSRRRACENGNSCLGCGVEFKTCNPEGCPEVRRNTPWTPWLPVNVTQGGARQEQRFRFTCRAPLADPHGLQFGRRRTETRTCPADGSGSCDTDALVEVLLRSGSTSPHTVSGGWAAWGPWSSCSRDCELGFRVRKRTCTNPEPRNGGLPCVGDAAEYQDCNPQACPVRGAWSCWTSWSPCSASCGGGHYQRTRSCTSPAPSPGEDICLGLHTEEALCATQACPEGWSPWSEWSKCTDDGAQSRSRHCEELLPGSSACAGNSSQSRPCPYSEIPVILPASSMEEATDCAGFNLIHLVATGISCFLGSGLLTLAVYLSCQHCQRQSQESTLVHPATPNHLHYKGGGTPKNEKYTPMEFKTLNKNNLIPDDRANFYPLQQTNVYTTTYYPSPLNKHSFRPEASPGQRCFPNS</sequence>
<dbReference type="EMBL" id="AB040878">
    <property type="protein sequence ID" value="BAA95969.1"/>
    <property type="status" value="ALT_INIT"/>
    <property type="molecule type" value="mRNA"/>
</dbReference>
<dbReference type="EMBL" id="AY358124">
    <property type="protein sequence ID" value="AAQ88491.1"/>
    <property type="molecule type" value="mRNA"/>
</dbReference>
<dbReference type="EMBL" id="AK001234">
    <property type="protein sequence ID" value="BAA91570.1"/>
    <property type="status" value="ALT_INIT"/>
    <property type="molecule type" value="mRNA"/>
</dbReference>
<dbReference type="EMBL" id="AK291407">
    <property type="protein sequence ID" value="BAF84096.1"/>
    <property type="molecule type" value="mRNA"/>
</dbReference>
<dbReference type="EMBL" id="AK295619">
    <property type="protein sequence ID" value="BAH12129.1"/>
    <property type="molecule type" value="mRNA"/>
</dbReference>
<dbReference type="EMBL" id="AC078794">
    <property type="status" value="NOT_ANNOTATED_CDS"/>
    <property type="molecule type" value="Genomic_DNA"/>
</dbReference>
<dbReference type="EMBL" id="AC083797">
    <property type="status" value="NOT_ANNOTATED_CDS"/>
    <property type="molecule type" value="Genomic_DNA"/>
</dbReference>
<dbReference type="EMBL" id="AC109130">
    <property type="status" value="NOT_ANNOTATED_CDS"/>
    <property type="molecule type" value="Genomic_DNA"/>
</dbReference>
<dbReference type="EMBL" id="CH471052">
    <property type="protein sequence ID" value="EAW79457.1"/>
    <property type="molecule type" value="Genomic_DNA"/>
</dbReference>
<dbReference type="EMBL" id="BC077726">
    <property type="protein sequence ID" value="AAH77726.1"/>
    <property type="molecule type" value="mRNA"/>
</dbReference>
<dbReference type="CCDS" id="CCDS35491.1">
    <molecule id="Q9P283-1"/>
</dbReference>
<dbReference type="CCDS" id="CCDS58848.1">
    <molecule id="Q9P283-4"/>
</dbReference>
<dbReference type="RefSeq" id="NP_001026872.2">
    <molecule id="Q9P283-1"/>
    <property type="nucleotide sequence ID" value="NM_001031702.4"/>
</dbReference>
<dbReference type="RefSeq" id="NP_001243275.1">
    <molecule id="Q9P283-1"/>
    <property type="nucleotide sequence ID" value="NM_001256346.2"/>
</dbReference>
<dbReference type="RefSeq" id="NP_001243276.1">
    <molecule id="Q9P283-4"/>
    <property type="nucleotide sequence ID" value="NM_001256347.1"/>
</dbReference>
<dbReference type="SMR" id="Q9P283"/>
<dbReference type="BioGRID" id="119953">
    <property type="interactions" value="10"/>
</dbReference>
<dbReference type="FunCoup" id="Q9P283">
    <property type="interactions" value="60"/>
</dbReference>
<dbReference type="IntAct" id="Q9P283">
    <property type="interactions" value="8"/>
</dbReference>
<dbReference type="MINT" id="Q9P283"/>
<dbReference type="STRING" id="9606.ENSP00000389588"/>
<dbReference type="GlyCosmos" id="Q9P283">
    <property type="glycosylation" value="5 sites, No reported glycans"/>
</dbReference>
<dbReference type="GlyGen" id="Q9P283">
    <property type="glycosylation" value="8 sites, 4 N-linked glycans (3 sites)"/>
</dbReference>
<dbReference type="iPTMnet" id="Q9P283"/>
<dbReference type="PhosphoSitePlus" id="Q9P283"/>
<dbReference type="BioMuta" id="SEMA5B"/>
<dbReference type="DMDM" id="212276522"/>
<dbReference type="jPOST" id="Q9P283"/>
<dbReference type="MassIVE" id="Q9P283"/>
<dbReference type="PaxDb" id="9606-ENSP00000389588"/>
<dbReference type="PeptideAtlas" id="Q9P283"/>
<dbReference type="ProteomicsDB" id="30384"/>
<dbReference type="ProteomicsDB" id="83748">
    <molecule id="Q9P283-1"/>
</dbReference>
<dbReference type="ProteomicsDB" id="83749">
    <molecule id="Q9P283-2"/>
</dbReference>
<dbReference type="ProteomicsDB" id="83750">
    <molecule id="Q9P283-3"/>
</dbReference>
<dbReference type="Antibodypedia" id="2250">
    <property type="antibodies" value="118 antibodies from 13 providers"/>
</dbReference>
<dbReference type="DNASU" id="54437"/>
<dbReference type="Ensembl" id="ENST00000357599.8">
    <molecule id="Q9P283-1"/>
    <property type="protein sequence ID" value="ENSP00000350215.3"/>
    <property type="gene ID" value="ENSG00000082684.16"/>
</dbReference>
<dbReference type="Ensembl" id="ENST00000451055.6">
    <molecule id="Q9P283-4"/>
    <property type="protein sequence ID" value="ENSP00000389588.2"/>
    <property type="gene ID" value="ENSG00000082684.16"/>
</dbReference>
<dbReference type="Ensembl" id="ENST00000616742.4">
    <molecule id="Q9P283-1"/>
    <property type="protein sequence ID" value="ENSP00000479602.1"/>
    <property type="gene ID" value="ENSG00000082684.16"/>
</dbReference>
<dbReference type="GeneID" id="54437"/>
<dbReference type="KEGG" id="hsa:54437"/>
<dbReference type="MANE-Select" id="ENST00000357599.8">
    <property type="protein sequence ID" value="ENSP00000350215.3"/>
    <property type="RefSeq nucleotide sequence ID" value="NM_001031702.4"/>
    <property type="RefSeq protein sequence ID" value="NP_001026872.2"/>
</dbReference>
<dbReference type="UCSC" id="uc003efz.3">
    <molecule id="Q9P283-1"/>
    <property type="organism name" value="human"/>
</dbReference>
<dbReference type="AGR" id="HGNC:10737"/>
<dbReference type="CTD" id="54437"/>
<dbReference type="DisGeNET" id="54437"/>
<dbReference type="GeneCards" id="SEMA5B"/>
<dbReference type="HGNC" id="HGNC:10737">
    <property type="gene designation" value="SEMA5B"/>
</dbReference>
<dbReference type="HPA" id="ENSG00000082684">
    <property type="expression patterns" value="Tissue enhanced (brain)"/>
</dbReference>
<dbReference type="MIM" id="609298">
    <property type="type" value="gene"/>
</dbReference>
<dbReference type="neXtProt" id="NX_Q9P283"/>
<dbReference type="OpenTargets" id="ENSG00000082684"/>
<dbReference type="PharmGKB" id="PA35659"/>
<dbReference type="VEuPathDB" id="HostDB:ENSG00000082684"/>
<dbReference type="eggNOG" id="KOG3611">
    <property type="taxonomic scope" value="Eukaryota"/>
</dbReference>
<dbReference type="GeneTree" id="ENSGT00940000156712"/>
<dbReference type="InParanoid" id="Q9P283"/>
<dbReference type="OMA" id="ERYCRND"/>
<dbReference type="OrthoDB" id="9988752at2759"/>
<dbReference type="PAN-GO" id="Q9P283">
    <property type="GO annotations" value="9 GO annotations based on evolutionary models"/>
</dbReference>
<dbReference type="PhylomeDB" id="Q9P283"/>
<dbReference type="TreeFam" id="TF329951"/>
<dbReference type="PathwayCommons" id="Q9P283"/>
<dbReference type="Reactome" id="R-HSA-5083635">
    <property type="pathway name" value="Defective B3GALTL causes PpS"/>
</dbReference>
<dbReference type="Reactome" id="R-HSA-5173214">
    <property type="pathway name" value="O-glycosylation of TSR domain-containing proteins"/>
</dbReference>
<dbReference type="SignaLink" id="Q9P283"/>
<dbReference type="SIGNOR" id="Q9P283"/>
<dbReference type="BioGRID-ORCS" id="54437">
    <property type="hits" value="14 hits in 1137 CRISPR screens"/>
</dbReference>
<dbReference type="ChiTaRS" id="SEMA5B">
    <property type="organism name" value="human"/>
</dbReference>
<dbReference type="GenomeRNAi" id="54437"/>
<dbReference type="Pharos" id="Q9P283">
    <property type="development level" value="Tbio"/>
</dbReference>
<dbReference type="PRO" id="PR:Q9P283"/>
<dbReference type="Proteomes" id="UP000005640">
    <property type="component" value="Chromosome 3"/>
</dbReference>
<dbReference type="RNAct" id="Q9P283">
    <property type="molecule type" value="protein"/>
</dbReference>
<dbReference type="Bgee" id="ENSG00000082684">
    <property type="expression patterns" value="Expressed in ventricular zone and 136 other cell types or tissues"/>
</dbReference>
<dbReference type="ExpressionAtlas" id="Q9P283">
    <property type="expression patterns" value="baseline and differential"/>
</dbReference>
<dbReference type="GO" id="GO:0005886">
    <property type="term" value="C:plasma membrane"/>
    <property type="evidence" value="ECO:0000318"/>
    <property type="project" value="GO_Central"/>
</dbReference>
<dbReference type="GO" id="GO:0045499">
    <property type="term" value="F:chemorepellent activity"/>
    <property type="evidence" value="ECO:0000318"/>
    <property type="project" value="GO_Central"/>
</dbReference>
<dbReference type="GO" id="GO:0030215">
    <property type="term" value="F:semaphorin receptor binding"/>
    <property type="evidence" value="ECO:0000318"/>
    <property type="project" value="GO_Central"/>
</dbReference>
<dbReference type="GO" id="GO:0048675">
    <property type="term" value="P:axon extension"/>
    <property type="evidence" value="ECO:0000318"/>
    <property type="project" value="GO_Central"/>
</dbReference>
<dbReference type="GO" id="GO:0007411">
    <property type="term" value="P:axon guidance"/>
    <property type="evidence" value="ECO:0000318"/>
    <property type="project" value="GO_Central"/>
</dbReference>
<dbReference type="GO" id="GO:0050908">
    <property type="term" value="P:detection of light stimulus involved in visual perception"/>
    <property type="evidence" value="ECO:0007669"/>
    <property type="project" value="Ensembl"/>
</dbReference>
<dbReference type="GO" id="GO:0001755">
    <property type="term" value="P:neural crest cell migration"/>
    <property type="evidence" value="ECO:0000318"/>
    <property type="project" value="GO_Central"/>
</dbReference>
<dbReference type="GO" id="GO:0030335">
    <property type="term" value="P:positive regulation of cell migration"/>
    <property type="evidence" value="ECO:0000318"/>
    <property type="project" value="GO_Central"/>
</dbReference>
<dbReference type="GO" id="GO:0071526">
    <property type="term" value="P:semaphorin-plexin signaling pathway"/>
    <property type="evidence" value="ECO:0000318"/>
    <property type="project" value="GO_Central"/>
</dbReference>
<dbReference type="CDD" id="cd11264">
    <property type="entry name" value="Sema_5B"/>
    <property type="match status" value="1"/>
</dbReference>
<dbReference type="FunFam" id="2.20.100.10:FF:000001">
    <property type="entry name" value="semaphorin-5A isoform X1"/>
    <property type="match status" value="4"/>
</dbReference>
<dbReference type="FunFam" id="2.130.10.10:FF:000048">
    <property type="entry name" value="semaphorin-5B isoform X1"/>
    <property type="match status" value="1"/>
</dbReference>
<dbReference type="FunFam" id="2.20.100.10:FF:000021">
    <property type="entry name" value="semaphorin-5B isoform X1"/>
    <property type="match status" value="1"/>
</dbReference>
<dbReference type="FunFam" id="3.30.1680.10:FF:000003">
    <property type="entry name" value="semaphorin-5B isoform X1"/>
    <property type="match status" value="1"/>
</dbReference>
<dbReference type="Gene3D" id="3.30.1680.10">
    <property type="entry name" value="ligand-binding face of the semaphorins, domain 2"/>
    <property type="match status" value="1"/>
</dbReference>
<dbReference type="Gene3D" id="2.20.100.10">
    <property type="entry name" value="Thrombospondin type-1 (TSP1) repeat"/>
    <property type="match status" value="6"/>
</dbReference>
<dbReference type="Gene3D" id="2.130.10.10">
    <property type="entry name" value="YVTN repeat-like/Quinoprotein amine dehydrogenase"/>
    <property type="match status" value="1"/>
</dbReference>
<dbReference type="InterPro" id="IPR002165">
    <property type="entry name" value="Plexin_repeat"/>
</dbReference>
<dbReference type="InterPro" id="IPR016201">
    <property type="entry name" value="PSI"/>
</dbReference>
<dbReference type="InterPro" id="IPR001627">
    <property type="entry name" value="Semap_dom"/>
</dbReference>
<dbReference type="InterPro" id="IPR036352">
    <property type="entry name" value="Semap_dom_sf"/>
</dbReference>
<dbReference type="InterPro" id="IPR027231">
    <property type="entry name" value="Semaphorin"/>
</dbReference>
<dbReference type="InterPro" id="IPR000884">
    <property type="entry name" value="TSP1_rpt"/>
</dbReference>
<dbReference type="InterPro" id="IPR036383">
    <property type="entry name" value="TSP1_rpt_sf"/>
</dbReference>
<dbReference type="InterPro" id="IPR015943">
    <property type="entry name" value="WD40/YVTN_repeat-like_dom_sf"/>
</dbReference>
<dbReference type="PANTHER" id="PTHR11036">
    <property type="entry name" value="SEMAPHORIN"/>
    <property type="match status" value="1"/>
</dbReference>
<dbReference type="PANTHER" id="PTHR11036:SF39">
    <property type="entry name" value="SEMAPHORIN-5B"/>
    <property type="match status" value="1"/>
</dbReference>
<dbReference type="Pfam" id="PF01437">
    <property type="entry name" value="PSI"/>
    <property type="match status" value="1"/>
</dbReference>
<dbReference type="Pfam" id="PF01403">
    <property type="entry name" value="Sema"/>
    <property type="match status" value="1"/>
</dbReference>
<dbReference type="Pfam" id="PF23260">
    <property type="entry name" value="TSP1_2"/>
    <property type="match status" value="1"/>
</dbReference>
<dbReference type="Pfam" id="PF00090">
    <property type="entry name" value="TSP_1"/>
    <property type="match status" value="5"/>
</dbReference>
<dbReference type="PRINTS" id="PR01705">
    <property type="entry name" value="TSP1REPEAT"/>
</dbReference>
<dbReference type="SMART" id="SM00423">
    <property type="entry name" value="PSI"/>
    <property type="match status" value="1"/>
</dbReference>
<dbReference type="SMART" id="SM00630">
    <property type="entry name" value="Sema"/>
    <property type="match status" value="1"/>
</dbReference>
<dbReference type="SMART" id="SM00209">
    <property type="entry name" value="TSP1"/>
    <property type="match status" value="5"/>
</dbReference>
<dbReference type="SUPFAM" id="SSF103575">
    <property type="entry name" value="Plexin repeat"/>
    <property type="match status" value="1"/>
</dbReference>
<dbReference type="SUPFAM" id="SSF101912">
    <property type="entry name" value="Sema domain"/>
    <property type="match status" value="1"/>
</dbReference>
<dbReference type="SUPFAM" id="SSF82895">
    <property type="entry name" value="TSP-1 type 1 repeat"/>
    <property type="match status" value="5"/>
</dbReference>
<dbReference type="PROSITE" id="PS51004">
    <property type="entry name" value="SEMA"/>
    <property type="match status" value="1"/>
</dbReference>
<dbReference type="PROSITE" id="PS50092">
    <property type="entry name" value="TSP1"/>
    <property type="match status" value="5"/>
</dbReference>
<organism>
    <name type="scientific">Homo sapiens</name>
    <name type="common">Human</name>
    <dbReference type="NCBI Taxonomy" id="9606"/>
    <lineage>
        <taxon>Eukaryota</taxon>
        <taxon>Metazoa</taxon>
        <taxon>Chordata</taxon>
        <taxon>Craniata</taxon>
        <taxon>Vertebrata</taxon>
        <taxon>Euteleostomi</taxon>
        <taxon>Mammalia</taxon>
        <taxon>Eutheria</taxon>
        <taxon>Euarchontoglires</taxon>
        <taxon>Primates</taxon>
        <taxon>Haplorrhini</taxon>
        <taxon>Catarrhini</taxon>
        <taxon>Hominidae</taxon>
        <taxon>Homo</taxon>
    </lineage>
</organism>